<accession>O58851</accession>
<feature type="chain" id="PRO_0000138741" description="Geranylgeranylglyceryl phosphate synthase">
    <location>
        <begin position="1"/>
        <end position="254"/>
    </location>
</feature>
<feature type="binding site" evidence="1">
    <location>
        <position position="28"/>
    </location>
    <ligand>
        <name>Mg(2+)</name>
        <dbReference type="ChEBI" id="CHEBI:18420"/>
    </ligand>
</feature>
<feature type="binding site" evidence="1">
    <location>
        <position position="57"/>
    </location>
    <ligand>
        <name>Mg(2+)</name>
        <dbReference type="ChEBI" id="CHEBI:18420"/>
    </ligand>
</feature>
<feature type="binding site" evidence="1">
    <location>
        <begin position="176"/>
        <end position="182"/>
    </location>
    <ligand>
        <name>sn-glycerol 1-phosphate</name>
        <dbReference type="ChEBI" id="CHEBI:57685"/>
    </ligand>
</feature>
<feature type="binding site" evidence="1">
    <location>
        <begin position="207"/>
        <end position="208"/>
    </location>
    <ligand>
        <name>sn-glycerol 1-phosphate</name>
        <dbReference type="ChEBI" id="CHEBI:57685"/>
    </ligand>
</feature>
<feature type="binding site" evidence="1">
    <location>
        <begin position="229"/>
        <end position="230"/>
    </location>
    <ligand>
        <name>sn-glycerol 1-phosphate</name>
        <dbReference type="ChEBI" id="CHEBI:57685"/>
    </ligand>
</feature>
<proteinExistence type="inferred from homology"/>
<reference key="1">
    <citation type="journal article" date="1998" name="DNA Res.">
        <title>Complete sequence and gene organization of the genome of a hyper-thermophilic archaebacterium, Pyrococcus horikoshii OT3.</title>
        <authorList>
            <person name="Kawarabayasi Y."/>
            <person name="Sawada M."/>
            <person name="Horikawa H."/>
            <person name="Haikawa Y."/>
            <person name="Hino Y."/>
            <person name="Yamamoto S."/>
            <person name="Sekine M."/>
            <person name="Baba S."/>
            <person name="Kosugi H."/>
            <person name="Hosoyama A."/>
            <person name="Nagai Y."/>
            <person name="Sakai M."/>
            <person name="Ogura K."/>
            <person name="Otsuka R."/>
            <person name="Nakazawa H."/>
            <person name="Takamiya M."/>
            <person name="Ohfuku Y."/>
            <person name="Funahashi T."/>
            <person name="Tanaka T."/>
            <person name="Kudoh Y."/>
            <person name="Yamazaki J."/>
            <person name="Kushida N."/>
            <person name="Oguchi A."/>
            <person name="Aoki K."/>
            <person name="Yoshizawa T."/>
            <person name="Nakamura Y."/>
            <person name="Robb F.T."/>
            <person name="Horikoshi K."/>
            <person name="Masuchi Y."/>
            <person name="Shizuya H."/>
            <person name="Kikuchi H."/>
        </authorList>
    </citation>
    <scope>NUCLEOTIDE SEQUENCE [LARGE SCALE GENOMIC DNA]</scope>
    <source>
        <strain>ATCC 700860 / DSM 12428 / JCM 9974 / NBRC 100139 / OT-3</strain>
    </source>
</reference>
<comment type="function">
    <text evidence="1">Prenyltransferase that catalyzes the transfer of the geranylgeranyl moiety of geranylgeranyl diphosphate (GGPP) to the C3 hydroxyl of sn-glycerol-1-phosphate (G1P). This reaction is the first ether-bond-formation step in the biosynthesis of archaeal membrane lipids.</text>
</comment>
<comment type="catalytic activity">
    <reaction evidence="1">
        <text>sn-glycerol 1-phosphate + (2E,6E,10E)-geranylgeranyl diphosphate = sn-3-O-(geranylgeranyl)glycerol 1-phosphate + diphosphate</text>
        <dbReference type="Rhea" id="RHEA:23404"/>
        <dbReference type="ChEBI" id="CHEBI:33019"/>
        <dbReference type="ChEBI" id="CHEBI:57677"/>
        <dbReference type="ChEBI" id="CHEBI:57685"/>
        <dbReference type="ChEBI" id="CHEBI:58756"/>
        <dbReference type="EC" id="2.5.1.41"/>
    </reaction>
</comment>
<comment type="cofactor">
    <cofactor evidence="1">
        <name>Mg(2+)</name>
        <dbReference type="ChEBI" id="CHEBI:18420"/>
    </cofactor>
</comment>
<comment type="pathway">
    <text evidence="1">Membrane lipid metabolism; glycerophospholipid metabolism.</text>
</comment>
<comment type="subcellular location">
    <subcellularLocation>
        <location evidence="1">Cytoplasm</location>
    </subcellularLocation>
</comment>
<comment type="similarity">
    <text evidence="1">Belongs to the GGGP/HepGP synthase family. Group II subfamily.</text>
</comment>
<sequence>MGELRIGKVEKYIHEKLEKKKLHFVLIDPDDTSPEVAGKLARVCEELGVDAIMVGGSTGAEGEVLDNVVRSIKDNSSLPVILFPGSHGGISRYADAIFFMSLLNSRNPFFITGAQALGAFTVKKFGIEPIPMAYIVVEPGETVGWVGDARPIPRHKPKLAAAYALAGQYLGMRLVYLEAGSGAPEPVPEEMVRVVKSVIDVPLIVGGGIKSGEQAKKLIKSGADIIVTGTAIEKAKSLEEARKRLEAIRNGVFV</sequence>
<gene>
    <name type="ordered locus">PH1124</name>
</gene>
<keyword id="KW-0963">Cytoplasm</keyword>
<keyword id="KW-0444">Lipid biosynthesis</keyword>
<keyword id="KW-0443">Lipid metabolism</keyword>
<keyword id="KW-0460">Magnesium</keyword>
<keyword id="KW-0479">Metal-binding</keyword>
<keyword id="KW-0594">Phospholipid biosynthesis</keyword>
<keyword id="KW-1208">Phospholipid metabolism</keyword>
<keyword id="KW-0808">Transferase</keyword>
<dbReference type="EC" id="2.5.1.41" evidence="1"/>
<dbReference type="EMBL" id="BA000001">
    <property type="protein sequence ID" value="BAA30223.1"/>
    <property type="molecule type" value="Genomic_DNA"/>
</dbReference>
<dbReference type="PIR" id="E71053">
    <property type="entry name" value="E71053"/>
</dbReference>
<dbReference type="RefSeq" id="WP_010885207.1">
    <property type="nucleotide sequence ID" value="NC_000961.1"/>
</dbReference>
<dbReference type="SMR" id="O58851"/>
<dbReference type="STRING" id="70601.gene:9378083"/>
<dbReference type="EnsemblBacteria" id="BAA30223">
    <property type="protein sequence ID" value="BAA30223"/>
    <property type="gene ID" value="BAA30223"/>
</dbReference>
<dbReference type="GeneID" id="1443442"/>
<dbReference type="KEGG" id="pho:PH1124"/>
<dbReference type="eggNOG" id="arCOG01085">
    <property type="taxonomic scope" value="Archaea"/>
</dbReference>
<dbReference type="OrthoDB" id="7409at2157"/>
<dbReference type="UniPathway" id="UPA00940"/>
<dbReference type="Proteomes" id="UP000000752">
    <property type="component" value="Chromosome"/>
</dbReference>
<dbReference type="GO" id="GO:0005737">
    <property type="term" value="C:cytoplasm"/>
    <property type="evidence" value="ECO:0007669"/>
    <property type="project" value="UniProtKB-SubCell"/>
</dbReference>
<dbReference type="GO" id="GO:0000107">
    <property type="term" value="F:imidazoleglycerol-phosphate synthase activity"/>
    <property type="evidence" value="ECO:0007669"/>
    <property type="project" value="TreeGrafter"/>
</dbReference>
<dbReference type="GO" id="GO:0000287">
    <property type="term" value="F:magnesium ion binding"/>
    <property type="evidence" value="ECO:0007669"/>
    <property type="project" value="UniProtKB-UniRule"/>
</dbReference>
<dbReference type="GO" id="GO:0047294">
    <property type="term" value="F:phosphoglycerol geranylgeranyltransferase activity"/>
    <property type="evidence" value="ECO:0007669"/>
    <property type="project" value="UniProtKB-UniRule"/>
</dbReference>
<dbReference type="GO" id="GO:0046474">
    <property type="term" value="P:glycerophospholipid biosynthetic process"/>
    <property type="evidence" value="ECO:0007669"/>
    <property type="project" value="UniProtKB-UniRule"/>
</dbReference>
<dbReference type="CDD" id="cd02812">
    <property type="entry name" value="PcrB_like"/>
    <property type="match status" value="1"/>
</dbReference>
<dbReference type="FunFam" id="3.20.20.390:FF:000001">
    <property type="entry name" value="Heptaprenylglyceryl phosphate synthase"/>
    <property type="match status" value="1"/>
</dbReference>
<dbReference type="Gene3D" id="3.20.20.390">
    <property type="entry name" value="FMN-linked oxidoreductases"/>
    <property type="match status" value="1"/>
</dbReference>
<dbReference type="HAMAP" id="MF_00112">
    <property type="entry name" value="GGGP_HepGP_synthase"/>
    <property type="match status" value="1"/>
</dbReference>
<dbReference type="InterPro" id="IPR038597">
    <property type="entry name" value="GGGP/HepGP_synthase_sf"/>
</dbReference>
<dbReference type="InterPro" id="IPR008205">
    <property type="entry name" value="GGGP_HepGP_synthase"/>
</dbReference>
<dbReference type="InterPro" id="IPR010946">
    <property type="entry name" value="GGGP_synth"/>
</dbReference>
<dbReference type="InterPro" id="IPR050064">
    <property type="entry name" value="IGPS_HisA/HisF"/>
</dbReference>
<dbReference type="NCBIfam" id="TIGR01769">
    <property type="entry name" value="GGGP"/>
    <property type="match status" value="1"/>
</dbReference>
<dbReference type="NCBIfam" id="TIGR01768">
    <property type="entry name" value="GGGP-family"/>
    <property type="match status" value="1"/>
</dbReference>
<dbReference type="NCBIfam" id="NF003198">
    <property type="entry name" value="PRK04169.1-2"/>
    <property type="match status" value="1"/>
</dbReference>
<dbReference type="PANTHER" id="PTHR21235:SF22">
    <property type="entry name" value="GERANYLGERANYLGLYCERYL PHOSPHATE SYNTHASE"/>
    <property type="match status" value="1"/>
</dbReference>
<dbReference type="PANTHER" id="PTHR21235">
    <property type="entry name" value="IMIDAZOLE GLYCEROL PHOSPHATE SYNTHASE SUBUNIT HISF/H IGP SYNTHASE SUBUNIT HISF/H"/>
    <property type="match status" value="1"/>
</dbReference>
<dbReference type="Pfam" id="PF01884">
    <property type="entry name" value="PcrB"/>
    <property type="match status" value="1"/>
</dbReference>
<dbReference type="SUPFAM" id="SSF51395">
    <property type="entry name" value="FMN-linked oxidoreductases"/>
    <property type="match status" value="1"/>
</dbReference>
<name>GGGPS_PYRHO</name>
<organism>
    <name type="scientific">Pyrococcus horikoshii (strain ATCC 700860 / DSM 12428 / JCM 9974 / NBRC 100139 / OT-3)</name>
    <dbReference type="NCBI Taxonomy" id="70601"/>
    <lineage>
        <taxon>Archaea</taxon>
        <taxon>Methanobacteriati</taxon>
        <taxon>Methanobacteriota</taxon>
        <taxon>Thermococci</taxon>
        <taxon>Thermococcales</taxon>
        <taxon>Thermococcaceae</taxon>
        <taxon>Pyrococcus</taxon>
    </lineage>
</organism>
<evidence type="ECO:0000255" key="1">
    <source>
        <dbReference type="HAMAP-Rule" id="MF_00112"/>
    </source>
</evidence>
<protein>
    <recommendedName>
        <fullName evidence="1">Geranylgeranylglyceryl phosphate synthase</fullName>
        <shortName evidence="1">GGGP synthase</shortName>
        <shortName evidence="1">GGGPS</shortName>
        <ecNumber evidence="1">2.5.1.41</ecNumber>
    </recommendedName>
    <alternativeName>
        <fullName evidence="1">(S)-3-O-geranylgeranylglyceryl phosphate synthase</fullName>
    </alternativeName>
    <alternativeName>
        <fullName evidence="1">Phosphoglycerol geranylgeranyltransferase</fullName>
    </alternativeName>
</protein>